<proteinExistence type="inferred from homology"/>
<comment type="function">
    <text evidence="1">Binds together with bS18 to 16S ribosomal RNA.</text>
</comment>
<comment type="similarity">
    <text evidence="1">Belongs to the bacterial ribosomal protein bS6 family.</text>
</comment>
<accession>A1WUS7</accession>
<gene>
    <name evidence="1" type="primary">rpsF</name>
    <name type="ordered locus">Hhal_0657</name>
</gene>
<organism>
    <name type="scientific">Halorhodospira halophila (strain DSM 244 / SL1)</name>
    <name type="common">Ectothiorhodospira halophila (strain DSM 244 / SL1)</name>
    <dbReference type="NCBI Taxonomy" id="349124"/>
    <lineage>
        <taxon>Bacteria</taxon>
        <taxon>Pseudomonadati</taxon>
        <taxon>Pseudomonadota</taxon>
        <taxon>Gammaproteobacteria</taxon>
        <taxon>Chromatiales</taxon>
        <taxon>Ectothiorhodospiraceae</taxon>
        <taxon>Halorhodospira</taxon>
    </lineage>
</organism>
<protein>
    <recommendedName>
        <fullName evidence="1">Small ribosomal subunit protein bS6</fullName>
    </recommendedName>
    <alternativeName>
        <fullName evidence="3">30S ribosomal protein S6</fullName>
    </alternativeName>
</protein>
<dbReference type="EMBL" id="CP000544">
    <property type="protein sequence ID" value="ABM61439.1"/>
    <property type="molecule type" value="Genomic_DNA"/>
</dbReference>
<dbReference type="RefSeq" id="WP_011813462.1">
    <property type="nucleotide sequence ID" value="NC_008789.1"/>
</dbReference>
<dbReference type="SMR" id="A1WUS7"/>
<dbReference type="STRING" id="349124.Hhal_0657"/>
<dbReference type="KEGG" id="hha:Hhal_0657"/>
<dbReference type="eggNOG" id="COG0360">
    <property type="taxonomic scope" value="Bacteria"/>
</dbReference>
<dbReference type="HOGENOM" id="CLU_113441_6_1_6"/>
<dbReference type="OrthoDB" id="9812702at2"/>
<dbReference type="Proteomes" id="UP000000647">
    <property type="component" value="Chromosome"/>
</dbReference>
<dbReference type="GO" id="GO:0022627">
    <property type="term" value="C:cytosolic small ribosomal subunit"/>
    <property type="evidence" value="ECO:0007669"/>
    <property type="project" value="TreeGrafter"/>
</dbReference>
<dbReference type="GO" id="GO:0070181">
    <property type="term" value="F:small ribosomal subunit rRNA binding"/>
    <property type="evidence" value="ECO:0007669"/>
    <property type="project" value="TreeGrafter"/>
</dbReference>
<dbReference type="GO" id="GO:0003735">
    <property type="term" value="F:structural constituent of ribosome"/>
    <property type="evidence" value="ECO:0007669"/>
    <property type="project" value="InterPro"/>
</dbReference>
<dbReference type="GO" id="GO:0006412">
    <property type="term" value="P:translation"/>
    <property type="evidence" value="ECO:0007669"/>
    <property type="project" value="UniProtKB-UniRule"/>
</dbReference>
<dbReference type="CDD" id="cd00473">
    <property type="entry name" value="bS6"/>
    <property type="match status" value="1"/>
</dbReference>
<dbReference type="FunFam" id="3.30.70.60:FF:000003">
    <property type="entry name" value="30S ribosomal protein S6"/>
    <property type="match status" value="1"/>
</dbReference>
<dbReference type="Gene3D" id="3.30.70.60">
    <property type="match status" value="1"/>
</dbReference>
<dbReference type="HAMAP" id="MF_00360">
    <property type="entry name" value="Ribosomal_bS6"/>
    <property type="match status" value="1"/>
</dbReference>
<dbReference type="InterPro" id="IPR000529">
    <property type="entry name" value="Ribosomal_bS6"/>
</dbReference>
<dbReference type="InterPro" id="IPR020815">
    <property type="entry name" value="Ribosomal_bS6_CS"/>
</dbReference>
<dbReference type="InterPro" id="IPR035980">
    <property type="entry name" value="Ribosomal_bS6_sf"/>
</dbReference>
<dbReference type="InterPro" id="IPR020814">
    <property type="entry name" value="Ribosomal_S6_plastid/chlpt"/>
</dbReference>
<dbReference type="InterPro" id="IPR014717">
    <property type="entry name" value="Transl_elong_EF1B/ribsomal_bS6"/>
</dbReference>
<dbReference type="NCBIfam" id="TIGR00166">
    <property type="entry name" value="S6"/>
    <property type="match status" value="1"/>
</dbReference>
<dbReference type="PANTHER" id="PTHR21011">
    <property type="entry name" value="MITOCHONDRIAL 28S RIBOSOMAL PROTEIN S6"/>
    <property type="match status" value="1"/>
</dbReference>
<dbReference type="PANTHER" id="PTHR21011:SF1">
    <property type="entry name" value="SMALL RIBOSOMAL SUBUNIT PROTEIN BS6M"/>
    <property type="match status" value="1"/>
</dbReference>
<dbReference type="Pfam" id="PF01250">
    <property type="entry name" value="Ribosomal_S6"/>
    <property type="match status" value="1"/>
</dbReference>
<dbReference type="SUPFAM" id="SSF54995">
    <property type="entry name" value="Ribosomal protein S6"/>
    <property type="match status" value="1"/>
</dbReference>
<dbReference type="PROSITE" id="PS01048">
    <property type="entry name" value="RIBOSOMAL_S6"/>
    <property type="match status" value="1"/>
</dbReference>
<sequence length="119" mass="13793">MRHYEIVFMVHPDQSDQVPAMVERYRSIVESSGGTVHRLEDWGRRQLAYPINKLIKAHYVLMNVECGKDELDELTSAFRFNDAVIRNMVLSRDEAVTEPSPLAKGNEKREDRKESEDAE</sequence>
<keyword id="KW-1185">Reference proteome</keyword>
<keyword id="KW-0687">Ribonucleoprotein</keyword>
<keyword id="KW-0689">Ribosomal protein</keyword>
<keyword id="KW-0694">RNA-binding</keyword>
<keyword id="KW-0699">rRNA-binding</keyword>
<reference key="1">
    <citation type="submission" date="2006-12" db="EMBL/GenBank/DDBJ databases">
        <title>Complete sequence of Halorhodospira halophila SL1.</title>
        <authorList>
            <consortium name="US DOE Joint Genome Institute"/>
            <person name="Copeland A."/>
            <person name="Lucas S."/>
            <person name="Lapidus A."/>
            <person name="Barry K."/>
            <person name="Detter J.C."/>
            <person name="Glavina del Rio T."/>
            <person name="Hammon N."/>
            <person name="Israni S."/>
            <person name="Dalin E."/>
            <person name="Tice H."/>
            <person name="Pitluck S."/>
            <person name="Saunders E."/>
            <person name="Brettin T."/>
            <person name="Bruce D."/>
            <person name="Han C."/>
            <person name="Tapia R."/>
            <person name="Schmutz J."/>
            <person name="Larimer F."/>
            <person name="Land M."/>
            <person name="Hauser L."/>
            <person name="Kyrpides N."/>
            <person name="Mikhailova N."/>
            <person name="Hoff W."/>
            <person name="Richardson P."/>
        </authorList>
    </citation>
    <scope>NUCLEOTIDE SEQUENCE [LARGE SCALE GENOMIC DNA]</scope>
    <source>
        <strain>DSM 244 / SL1</strain>
    </source>
</reference>
<name>RS6_HALHL</name>
<evidence type="ECO:0000255" key="1">
    <source>
        <dbReference type="HAMAP-Rule" id="MF_00360"/>
    </source>
</evidence>
<evidence type="ECO:0000256" key="2">
    <source>
        <dbReference type="SAM" id="MobiDB-lite"/>
    </source>
</evidence>
<evidence type="ECO:0000305" key="3"/>
<feature type="chain" id="PRO_1000005273" description="Small ribosomal subunit protein bS6">
    <location>
        <begin position="1"/>
        <end position="119"/>
    </location>
</feature>
<feature type="region of interest" description="Disordered" evidence="2">
    <location>
        <begin position="95"/>
        <end position="119"/>
    </location>
</feature>
<feature type="compositionally biased region" description="Basic and acidic residues" evidence="2">
    <location>
        <begin position="105"/>
        <end position="119"/>
    </location>
</feature>